<protein>
    <recommendedName>
        <fullName evidence="1">Large ribosomal subunit protein bL27</fullName>
    </recommendedName>
    <alternativeName>
        <fullName evidence="3">50S ribosomal protein L27</fullName>
    </alternativeName>
</protein>
<accession>A6Q4D3</accession>
<evidence type="ECO:0000255" key="1">
    <source>
        <dbReference type="HAMAP-Rule" id="MF_00539"/>
    </source>
</evidence>
<evidence type="ECO:0000256" key="2">
    <source>
        <dbReference type="SAM" id="MobiDB-lite"/>
    </source>
</evidence>
<evidence type="ECO:0000305" key="3"/>
<gene>
    <name evidence="1" type="primary">rpmA</name>
    <name type="ordered locus">NIS_1233</name>
</gene>
<name>RL27_NITSB</name>
<reference key="1">
    <citation type="journal article" date="2007" name="Proc. Natl. Acad. Sci. U.S.A.">
        <title>Deep-sea vent epsilon-proteobacterial genomes provide insights into emergence of pathogens.</title>
        <authorList>
            <person name="Nakagawa S."/>
            <person name="Takaki Y."/>
            <person name="Shimamura S."/>
            <person name="Reysenbach A.-L."/>
            <person name="Takai K."/>
            <person name="Horikoshi K."/>
        </authorList>
    </citation>
    <scope>NUCLEOTIDE SEQUENCE [LARGE SCALE GENOMIC DNA]</scope>
    <source>
        <strain>SB155-2</strain>
    </source>
</reference>
<feature type="chain" id="PRO_1000017533" description="Large ribosomal subunit protein bL27">
    <location>
        <begin position="1"/>
        <end position="85"/>
    </location>
</feature>
<feature type="region of interest" description="Disordered" evidence="2">
    <location>
        <begin position="1"/>
        <end position="21"/>
    </location>
</feature>
<sequence>MAHKKGQGSTQNNRDSAGRRLGVKKFGGEFVRAGNIIIRQRGTKVHPGNNVGLGKDHTIFALIDGVVKFERYGKDRQKVSVYPVE</sequence>
<organism>
    <name type="scientific">Nitratiruptor sp. (strain SB155-2)</name>
    <dbReference type="NCBI Taxonomy" id="387092"/>
    <lineage>
        <taxon>Bacteria</taxon>
        <taxon>Pseudomonadati</taxon>
        <taxon>Campylobacterota</taxon>
        <taxon>Epsilonproteobacteria</taxon>
        <taxon>Nautiliales</taxon>
        <taxon>Nitratiruptoraceae</taxon>
        <taxon>Nitratiruptor</taxon>
    </lineage>
</organism>
<keyword id="KW-1185">Reference proteome</keyword>
<keyword id="KW-0687">Ribonucleoprotein</keyword>
<keyword id="KW-0689">Ribosomal protein</keyword>
<proteinExistence type="inferred from homology"/>
<comment type="similarity">
    <text evidence="1">Belongs to the bacterial ribosomal protein bL27 family.</text>
</comment>
<dbReference type="EMBL" id="AP009178">
    <property type="protein sequence ID" value="BAF70342.1"/>
    <property type="molecule type" value="Genomic_DNA"/>
</dbReference>
<dbReference type="RefSeq" id="WP_012082605.1">
    <property type="nucleotide sequence ID" value="NC_009662.1"/>
</dbReference>
<dbReference type="SMR" id="A6Q4D3"/>
<dbReference type="FunCoup" id="A6Q4D3">
    <property type="interactions" value="492"/>
</dbReference>
<dbReference type="STRING" id="387092.NIS_1233"/>
<dbReference type="KEGG" id="nis:NIS_1233"/>
<dbReference type="eggNOG" id="COG0211">
    <property type="taxonomic scope" value="Bacteria"/>
</dbReference>
<dbReference type="HOGENOM" id="CLU_095424_4_0_7"/>
<dbReference type="InParanoid" id="A6Q4D3"/>
<dbReference type="OrthoDB" id="9803474at2"/>
<dbReference type="Proteomes" id="UP000001118">
    <property type="component" value="Chromosome"/>
</dbReference>
<dbReference type="GO" id="GO:0022625">
    <property type="term" value="C:cytosolic large ribosomal subunit"/>
    <property type="evidence" value="ECO:0007669"/>
    <property type="project" value="TreeGrafter"/>
</dbReference>
<dbReference type="GO" id="GO:0003735">
    <property type="term" value="F:structural constituent of ribosome"/>
    <property type="evidence" value="ECO:0007669"/>
    <property type="project" value="InterPro"/>
</dbReference>
<dbReference type="GO" id="GO:0006412">
    <property type="term" value="P:translation"/>
    <property type="evidence" value="ECO:0007669"/>
    <property type="project" value="UniProtKB-UniRule"/>
</dbReference>
<dbReference type="FunFam" id="2.40.50.100:FF:000004">
    <property type="entry name" value="50S ribosomal protein L27"/>
    <property type="match status" value="1"/>
</dbReference>
<dbReference type="Gene3D" id="2.40.50.100">
    <property type="match status" value="1"/>
</dbReference>
<dbReference type="HAMAP" id="MF_00539">
    <property type="entry name" value="Ribosomal_bL27"/>
    <property type="match status" value="1"/>
</dbReference>
<dbReference type="InterPro" id="IPR001684">
    <property type="entry name" value="Ribosomal_bL27"/>
</dbReference>
<dbReference type="InterPro" id="IPR018261">
    <property type="entry name" value="Ribosomal_bL27_CS"/>
</dbReference>
<dbReference type="NCBIfam" id="TIGR00062">
    <property type="entry name" value="L27"/>
    <property type="match status" value="1"/>
</dbReference>
<dbReference type="PANTHER" id="PTHR15893:SF0">
    <property type="entry name" value="LARGE RIBOSOMAL SUBUNIT PROTEIN BL27M"/>
    <property type="match status" value="1"/>
</dbReference>
<dbReference type="PANTHER" id="PTHR15893">
    <property type="entry name" value="RIBOSOMAL PROTEIN L27"/>
    <property type="match status" value="1"/>
</dbReference>
<dbReference type="Pfam" id="PF01016">
    <property type="entry name" value="Ribosomal_L27"/>
    <property type="match status" value="1"/>
</dbReference>
<dbReference type="PRINTS" id="PR00063">
    <property type="entry name" value="RIBOSOMALL27"/>
</dbReference>
<dbReference type="SUPFAM" id="SSF110324">
    <property type="entry name" value="Ribosomal L27 protein-like"/>
    <property type="match status" value="1"/>
</dbReference>
<dbReference type="PROSITE" id="PS00831">
    <property type="entry name" value="RIBOSOMAL_L27"/>
    <property type="match status" value="1"/>
</dbReference>